<proteinExistence type="evidence at protein level"/>
<evidence type="ECO:0000269" key="1">
    <source>
    </source>
</evidence>
<evidence type="ECO:0000269" key="2">
    <source>
    </source>
</evidence>
<evidence type="ECO:0000269" key="3">
    <source>
    </source>
</evidence>
<evidence type="ECO:0000269" key="4">
    <source>
    </source>
</evidence>
<evidence type="ECO:0000269" key="5">
    <source>
    </source>
</evidence>
<evidence type="ECO:0000269" key="6">
    <source>
    </source>
</evidence>
<evidence type="ECO:0000269" key="7">
    <source>
    </source>
</evidence>
<evidence type="ECO:0000269" key="8">
    <source>
    </source>
</evidence>
<evidence type="ECO:0000269" key="9">
    <source>
    </source>
</evidence>
<evidence type="ECO:0000269" key="10">
    <source>
    </source>
</evidence>
<evidence type="ECO:0000303" key="11">
    <source>
    </source>
</evidence>
<evidence type="ECO:0000305" key="12"/>
<evidence type="ECO:0000305" key="13">
    <source>
    </source>
</evidence>
<evidence type="ECO:0007829" key="14">
    <source>
        <dbReference type="PDB" id="1HZT"/>
    </source>
</evidence>
<evidence type="ECO:0007829" key="15">
    <source>
        <dbReference type="PDB" id="1PPV"/>
    </source>
</evidence>
<name>IDI_ECOLI</name>
<organism>
    <name type="scientific">Escherichia coli (strain K12)</name>
    <dbReference type="NCBI Taxonomy" id="83333"/>
    <lineage>
        <taxon>Bacteria</taxon>
        <taxon>Pseudomonadati</taxon>
        <taxon>Pseudomonadota</taxon>
        <taxon>Gammaproteobacteria</taxon>
        <taxon>Enterobacterales</taxon>
        <taxon>Enterobacteriaceae</taxon>
        <taxon>Escherichia</taxon>
    </lineage>
</organism>
<accession>Q46822</accession>
<accession>Q2M9V2</accession>
<dbReference type="EC" id="5.3.3.2" evidence="2"/>
<dbReference type="EMBL" id="AF119715">
    <property type="protein sequence ID" value="AAD26812.1"/>
    <property type="molecule type" value="Genomic_DNA"/>
</dbReference>
<dbReference type="EMBL" id="U28375">
    <property type="protein sequence ID" value="AAA83070.1"/>
    <property type="molecule type" value="Genomic_DNA"/>
</dbReference>
<dbReference type="EMBL" id="U00096">
    <property type="protein sequence ID" value="AAC75927.1"/>
    <property type="molecule type" value="Genomic_DNA"/>
</dbReference>
<dbReference type="EMBL" id="AP009048">
    <property type="protein sequence ID" value="BAE76954.1"/>
    <property type="molecule type" value="Genomic_DNA"/>
</dbReference>
<dbReference type="PIR" id="A65073">
    <property type="entry name" value="A65073"/>
</dbReference>
<dbReference type="RefSeq" id="NP_417365.1">
    <property type="nucleotide sequence ID" value="NC_000913.3"/>
</dbReference>
<dbReference type="RefSeq" id="WP_001192820.1">
    <property type="nucleotide sequence ID" value="NZ_LN832404.1"/>
</dbReference>
<dbReference type="PDB" id="1HX3">
    <property type="method" value="X-ray"/>
    <property type="resolution" value="2.10 A"/>
    <property type="chains" value="A/B=1-182"/>
</dbReference>
<dbReference type="PDB" id="1HZT">
    <property type="method" value="X-ray"/>
    <property type="resolution" value="1.45 A"/>
    <property type="chains" value="A=1-182"/>
</dbReference>
<dbReference type="PDB" id="1I9A">
    <property type="method" value="X-ray"/>
    <property type="resolution" value="2.50 A"/>
    <property type="chains" value="A/B=1-182"/>
</dbReference>
<dbReference type="PDB" id="1NFS">
    <property type="method" value="X-ray"/>
    <property type="resolution" value="1.96 A"/>
    <property type="chains" value="A/B=1-182"/>
</dbReference>
<dbReference type="PDB" id="1NFZ">
    <property type="method" value="X-ray"/>
    <property type="resolution" value="1.97 A"/>
    <property type="chains" value="A/B=1-182"/>
</dbReference>
<dbReference type="PDB" id="1OW2">
    <property type="method" value="X-ray"/>
    <property type="resolution" value="2.00 A"/>
    <property type="chains" value="A/B=1-182"/>
</dbReference>
<dbReference type="PDB" id="1PPV">
    <property type="method" value="X-ray"/>
    <property type="resolution" value="1.70 A"/>
    <property type="chains" value="A/B=1-182"/>
</dbReference>
<dbReference type="PDB" id="1PPW">
    <property type="method" value="X-ray"/>
    <property type="resolution" value="2.21 A"/>
    <property type="chains" value="A/B=1-182"/>
</dbReference>
<dbReference type="PDB" id="1PVF">
    <property type="method" value="X-ray"/>
    <property type="resolution" value="1.78 A"/>
    <property type="chains" value="A/B=1-182"/>
</dbReference>
<dbReference type="PDB" id="1Q54">
    <property type="method" value="X-ray"/>
    <property type="resolution" value="1.93 A"/>
    <property type="chains" value="A/B=1-182"/>
</dbReference>
<dbReference type="PDB" id="1R67">
    <property type="method" value="X-ray"/>
    <property type="resolution" value="1.77 A"/>
    <property type="chains" value="A=1-182"/>
</dbReference>
<dbReference type="PDB" id="1X83">
    <property type="method" value="X-ray"/>
    <property type="resolution" value="1.80 A"/>
    <property type="chains" value="A/B=1-182"/>
</dbReference>
<dbReference type="PDB" id="1X84">
    <property type="method" value="X-ray"/>
    <property type="resolution" value="1.78 A"/>
    <property type="chains" value="A/B=1-182"/>
</dbReference>
<dbReference type="PDB" id="2B2K">
    <property type="method" value="X-ray"/>
    <property type="resolution" value="1.97 A"/>
    <property type="chains" value="A/B=1-182"/>
</dbReference>
<dbReference type="PDB" id="2G73">
    <property type="method" value="X-ray"/>
    <property type="resolution" value="1.97 A"/>
    <property type="chains" value="A/B=1-182"/>
</dbReference>
<dbReference type="PDB" id="2G74">
    <property type="method" value="X-ray"/>
    <property type="resolution" value="1.96 A"/>
    <property type="chains" value="A/B=1-182"/>
</dbReference>
<dbReference type="PDB" id="2VNP">
    <property type="method" value="X-ray"/>
    <property type="resolution" value="2.19 A"/>
    <property type="chains" value="A/B=1-182"/>
</dbReference>
<dbReference type="PDB" id="2VNQ">
    <property type="method" value="X-ray"/>
    <property type="resolution" value="2.20 A"/>
    <property type="chains" value="A/B=1-182"/>
</dbReference>
<dbReference type="PDBsum" id="1HX3"/>
<dbReference type="PDBsum" id="1HZT"/>
<dbReference type="PDBsum" id="1I9A"/>
<dbReference type="PDBsum" id="1NFS"/>
<dbReference type="PDBsum" id="1NFZ"/>
<dbReference type="PDBsum" id="1OW2"/>
<dbReference type="PDBsum" id="1PPV"/>
<dbReference type="PDBsum" id="1PPW"/>
<dbReference type="PDBsum" id="1PVF"/>
<dbReference type="PDBsum" id="1Q54"/>
<dbReference type="PDBsum" id="1R67"/>
<dbReference type="PDBsum" id="1X83"/>
<dbReference type="PDBsum" id="1X84"/>
<dbReference type="PDBsum" id="2B2K"/>
<dbReference type="PDBsum" id="2G73"/>
<dbReference type="PDBsum" id="2G74"/>
<dbReference type="PDBsum" id="2VNP"/>
<dbReference type="PDBsum" id="2VNQ"/>
<dbReference type="SMR" id="Q46822"/>
<dbReference type="BioGRID" id="4259434">
    <property type="interactions" value="134"/>
</dbReference>
<dbReference type="FunCoup" id="Q46822">
    <property type="interactions" value="494"/>
</dbReference>
<dbReference type="IntAct" id="Q46822">
    <property type="interactions" value="4"/>
</dbReference>
<dbReference type="STRING" id="511145.b2889"/>
<dbReference type="BindingDB" id="Q46822"/>
<dbReference type="ChEMBL" id="CHEMBL5291513"/>
<dbReference type="DrugBank" id="DB02480">
    <property type="generic name" value="(S)-4-bromo-3-hydroxy-3-methylbutyl diphosphate"/>
</dbReference>
<dbReference type="DrugBank" id="DB03165">
    <property type="generic name" value="2-Dimethylamino-Ethyl-Diphosphate"/>
</dbReference>
<dbReference type="DrugBank" id="DB04170">
    <property type="generic name" value="4-bromo-3-hydroxy-3-methyl butyl diphosphate"/>
</dbReference>
<dbReference type="DrugBank" id="DB01799">
    <property type="generic name" value="4-Hydroxy-3-Methyl Butyl Diphosphate"/>
</dbReference>
<dbReference type="DrugBank" id="DB03366">
    <property type="generic name" value="Imidazole"/>
</dbReference>
<dbReference type="jPOST" id="Q46822"/>
<dbReference type="PaxDb" id="511145-b2889"/>
<dbReference type="EnsemblBacteria" id="AAC75927">
    <property type="protein sequence ID" value="AAC75927"/>
    <property type="gene ID" value="b2889"/>
</dbReference>
<dbReference type="GeneID" id="949020"/>
<dbReference type="KEGG" id="ecj:JW2857"/>
<dbReference type="KEGG" id="eco:b2889"/>
<dbReference type="KEGG" id="ecoc:C3026_15845"/>
<dbReference type="PATRIC" id="fig|1411691.4.peg.3845"/>
<dbReference type="EchoBASE" id="EB2883"/>
<dbReference type="eggNOG" id="COG1443">
    <property type="taxonomic scope" value="Bacteria"/>
</dbReference>
<dbReference type="HOGENOM" id="CLU_060552_2_0_6"/>
<dbReference type="InParanoid" id="Q46822"/>
<dbReference type="OMA" id="LRLCPWF"/>
<dbReference type="OrthoDB" id="9809458at2"/>
<dbReference type="PhylomeDB" id="Q46822"/>
<dbReference type="BioCyc" id="EcoCyc:IPPISOM-MONOMER"/>
<dbReference type="BioCyc" id="MetaCyc:IPPISOM-MONOMER"/>
<dbReference type="BRENDA" id="5.3.3.2">
    <property type="organism ID" value="2026"/>
</dbReference>
<dbReference type="SABIO-RK" id="Q46822"/>
<dbReference type="UniPathway" id="UPA00059">
    <property type="reaction ID" value="UER00104"/>
</dbReference>
<dbReference type="EvolutionaryTrace" id="Q46822"/>
<dbReference type="PRO" id="PR:Q46822"/>
<dbReference type="Proteomes" id="UP000000625">
    <property type="component" value="Chromosome"/>
</dbReference>
<dbReference type="GO" id="GO:0005737">
    <property type="term" value="C:cytoplasm"/>
    <property type="evidence" value="ECO:0007669"/>
    <property type="project" value="UniProtKB-SubCell"/>
</dbReference>
<dbReference type="GO" id="GO:0004452">
    <property type="term" value="F:isopentenyl-diphosphate delta-isomerase activity"/>
    <property type="evidence" value="ECO:0000314"/>
    <property type="project" value="EcoCyc"/>
</dbReference>
<dbReference type="GO" id="GO:0000287">
    <property type="term" value="F:magnesium ion binding"/>
    <property type="evidence" value="ECO:0000314"/>
    <property type="project" value="EcoCyc"/>
</dbReference>
<dbReference type="GO" id="GO:0008270">
    <property type="term" value="F:zinc ion binding"/>
    <property type="evidence" value="ECO:0000314"/>
    <property type="project" value="EcoCyc"/>
</dbReference>
<dbReference type="GO" id="GO:0050992">
    <property type="term" value="P:dimethylallyl diphosphate biosynthetic process"/>
    <property type="evidence" value="ECO:0007669"/>
    <property type="project" value="UniProtKB-UniRule"/>
</dbReference>
<dbReference type="GO" id="GO:0006974">
    <property type="term" value="P:DNA damage response"/>
    <property type="evidence" value="ECO:0000270"/>
    <property type="project" value="EcoliWiki"/>
</dbReference>
<dbReference type="GO" id="GO:0008299">
    <property type="term" value="P:isoprenoid biosynthetic process"/>
    <property type="evidence" value="ECO:0000315"/>
    <property type="project" value="EcoCyc"/>
</dbReference>
<dbReference type="CDD" id="cd02885">
    <property type="entry name" value="NUDIX_IPP_Isomerase"/>
    <property type="match status" value="1"/>
</dbReference>
<dbReference type="FunFam" id="3.90.79.10:FF:000009">
    <property type="entry name" value="Isopentenyl-diphosphate Delta-isomerase"/>
    <property type="match status" value="1"/>
</dbReference>
<dbReference type="Gene3D" id="3.90.79.10">
    <property type="entry name" value="Nucleoside Triphosphate Pyrophosphohydrolase"/>
    <property type="match status" value="1"/>
</dbReference>
<dbReference type="HAMAP" id="MF_00202">
    <property type="entry name" value="Idi"/>
    <property type="match status" value="1"/>
</dbReference>
<dbReference type="InterPro" id="IPR056375">
    <property type="entry name" value="Idi_bact"/>
</dbReference>
<dbReference type="InterPro" id="IPR011876">
    <property type="entry name" value="IsopentenylPP_isomerase_typ1"/>
</dbReference>
<dbReference type="InterPro" id="IPR015797">
    <property type="entry name" value="NUDIX_hydrolase-like_dom_sf"/>
</dbReference>
<dbReference type="InterPro" id="IPR000086">
    <property type="entry name" value="NUDIX_hydrolase_dom"/>
</dbReference>
<dbReference type="NCBIfam" id="TIGR02150">
    <property type="entry name" value="IPP_isom_1"/>
    <property type="match status" value="1"/>
</dbReference>
<dbReference type="NCBIfam" id="NF002995">
    <property type="entry name" value="PRK03759.1"/>
    <property type="match status" value="1"/>
</dbReference>
<dbReference type="PANTHER" id="PTHR10885">
    <property type="entry name" value="ISOPENTENYL-DIPHOSPHATE DELTA-ISOMERASE"/>
    <property type="match status" value="1"/>
</dbReference>
<dbReference type="PANTHER" id="PTHR10885:SF0">
    <property type="entry name" value="ISOPENTENYL-DIPHOSPHATE DELTA-ISOMERASE"/>
    <property type="match status" value="1"/>
</dbReference>
<dbReference type="Pfam" id="PF00293">
    <property type="entry name" value="NUDIX"/>
    <property type="match status" value="1"/>
</dbReference>
<dbReference type="PIRSF" id="PIRSF018427">
    <property type="entry name" value="Isopntndiph_ism"/>
    <property type="match status" value="1"/>
</dbReference>
<dbReference type="SUPFAM" id="SSF55811">
    <property type="entry name" value="Nudix"/>
    <property type="match status" value="1"/>
</dbReference>
<dbReference type="PROSITE" id="PS51462">
    <property type="entry name" value="NUDIX"/>
    <property type="match status" value="1"/>
</dbReference>
<comment type="function">
    <text evidence="1 2 10">Catalyzes the 1,3-allylic rearrangement of the homoallylic substrate isopentenyl (IPP) to its highly electrophilic allylic isomer, dimethylallyl diphosphate (DMAPP).</text>
</comment>
<comment type="catalytic activity">
    <reaction evidence="2">
        <text>isopentenyl diphosphate = dimethylallyl diphosphate</text>
        <dbReference type="Rhea" id="RHEA:23284"/>
        <dbReference type="ChEBI" id="CHEBI:57623"/>
        <dbReference type="ChEBI" id="CHEBI:128769"/>
        <dbReference type="EC" id="5.3.3.2"/>
    </reaction>
    <physiologicalReaction direction="left-to-right" evidence="13">
        <dbReference type="Rhea" id="RHEA:23285"/>
    </physiologicalReaction>
</comment>
<comment type="cofactor">
    <cofactor evidence="2">
        <name>Mg(2+)</name>
        <dbReference type="ChEBI" id="CHEBI:18420"/>
    </cofactor>
    <text>Binds 1 Mg(2+) ion per subunit. The magnesium ion binds only when substrate is bound.</text>
</comment>
<comment type="cofactor">
    <cofactor evidence="2">
        <name>Mn(2+)</name>
        <dbReference type="ChEBI" id="CHEBI:29035"/>
    </cofactor>
    <text>Binds 1 Mn(2+) ion per subunit.</text>
</comment>
<comment type="biophysicochemical properties">
    <kinetics>
        <KM evidence="9">9.5 uM for isopentenyl diphosphate</KM>
        <KM evidence="2">7.9 uM for isopentenyl diphosphate</KM>
        <KM evidence="2">14.3 uM for dimethylallyl diphosphate</KM>
        <Vmax evidence="9">260.0 mmol/h/mg enzyme</Vmax>
        <Vmax evidence="2">0.97 umol/min/mg enzyme</Vmax>
    </kinetics>
</comment>
<comment type="pathway">
    <text evidence="13">Isoprenoid biosynthesis; dimethylallyl diphosphate biosynthesis; dimethylallyl diphosphate from isopentenyl diphosphate: step 1/1.</text>
</comment>
<comment type="subunit">
    <text evidence="3 4 5 6 7 8 9">Homodimer.</text>
</comment>
<comment type="subcellular location">
    <subcellularLocation>
        <location>Cytoplasm</location>
    </subcellularLocation>
</comment>
<comment type="similarity">
    <text evidence="12">Belongs to the IPP isomerase type 1 family.</text>
</comment>
<reference key="1">
    <citation type="journal article" date="1999" name="Biotechnol. Bioeng.">
        <title>Engineered isoprenoid pathway enhances astaxanthin production in Escherichia coli.</title>
        <authorList>
            <person name="Wang C.-W."/>
            <person name="Oh M.-K."/>
            <person name="Liao J.C."/>
        </authorList>
    </citation>
    <scope>NUCLEOTIDE SEQUENCE [GENOMIC DNA]</scope>
    <scope>FUNCTION</scope>
    <source>
        <strain>K12 / MG1655 / ATCC 47076</strain>
    </source>
</reference>
<reference key="2">
    <citation type="journal article" date="1997" name="Science">
        <title>The complete genome sequence of Escherichia coli K-12.</title>
        <authorList>
            <person name="Blattner F.R."/>
            <person name="Plunkett G. III"/>
            <person name="Bloch C.A."/>
            <person name="Perna N.T."/>
            <person name="Burland V."/>
            <person name="Riley M."/>
            <person name="Collado-Vides J."/>
            <person name="Glasner J.D."/>
            <person name="Rode C.K."/>
            <person name="Mayhew G.F."/>
            <person name="Gregor J."/>
            <person name="Davis N.W."/>
            <person name="Kirkpatrick H.A."/>
            <person name="Goeden M.A."/>
            <person name="Rose D.J."/>
            <person name="Mau B."/>
            <person name="Shao Y."/>
        </authorList>
    </citation>
    <scope>NUCLEOTIDE SEQUENCE [LARGE SCALE GENOMIC DNA]</scope>
    <source>
        <strain>K12 / MG1655 / ATCC 47076</strain>
    </source>
</reference>
<reference key="3">
    <citation type="journal article" date="2006" name="Mol. Syst. Biol.">
        <title>Highly accurate genome sequences of Escherichia coli K-12 strains MG1655 and W3110.</title>
        <authorList>
            <person name="Hayashi K."/>
            <person name="Morooka N."/>
            <person name="Yamamoto Y."/>
            <person name="Fujita K."/>
            <person name="Isono K."/>
            <person name="Choi S."/>
            <person name="Ohtsubo E."/>
            <person name="Baba T."/>
            <person name="Wanner B.L."/>
            <person name="Mori H."/>
            <person name="Horiuchi T."/>
        </authorList>
    </citation>
    <scope>NUCLEOTIDE SEQUENCE [LARGE SCALE GENOMIC DNA]</scope>
    <source>
        <strain>K12 / W3110 / ATCC 27325 / DSM 5911</strain>
    </source>
</reference>
<reference key="4">
    <citation type="journal article" date="1998" name="J. Biochem.">
        <title>Identification of genes affecting lycopene formation in Escherichia coli transformed with carotenoid biosynthetic genes: candidates for early genes in isoprenoid biosynthesis.</title>
        <authorList>
            <person name="Hemmi H."/>
            <person name="Ohnuma S."/>
            <person name="Nagaoka K."/>
            <person name="Nishino T."/>
        </authorList>
    </citation>
    <scope>FUNCTION</scope>
</reference>
<reference key="5">
    <citation type="journal article" date="1999" name="J. Bacteriol.">
        <title>Escherichia coli open reading frame 696 is idi, a nonessential gene encoding isopentenyl diphosphate isomerase.</title>
        <authorList>
            <person name="Hahn F.M."/>
            <person name="Hurlburt A.P."/>
            <person name="Poulter C.D."/>
        </authorList>
    </citation>
    <scope>FUNCTION</scope>
    <scope>CATALYTIC ACTIVITY</scope>
    <scope>COFACTOR</scope>
    <scope>BIOPHYSICOCHEMICAL PROPERTIES</scope>
    <scope>PATHWAY</scope>
</reference>
<reference key="6">
    <citation type="journal article" date="2001" name="EMBO J.">
        <title>Crystal structure of isopentenyl diphosphate:dimethylallyl diphosphate isomerase.</title>
        <authorList>
            <person name="Durbecq V."/>
            <person name="Sainz G."/>
            <person name="Oudjama Y."/>
            <person name="Clantin B."/>
            <person name="Bompard-Gilles C."/>
            <person name="Tricot C."/>
            <person name="Caillet J."/>
            <person name="Stalon V."/>
            <person name="Droogmans L."/>
            <person name="Villeret V."/>
        </authorList>
    </citation>
    <scope>X-RAY CRYSTALLOGRAPHY (1.45 ANGSTROMS) IN COMPLEX WITH METAL IONS</scope>
</reference>
<reference key="7">
    <citation type="journal article" date="2001" name="Proc. Natl. Acad. Sci. U.S.A.">
        <title>Structural genomics of enzymes involved in sterol/isoprenoid biosynthesis.</title>
        <authorList>
            <person name="Bonanno J.B."/>
            <person name="Edo C."/>
            <person name="Eswar N."/>
            <person name="Pieper U."/>
            <person name="Romanowski M.J."/>
            <person name="Ilyin V."/>
            <person name="Gerchman S.E."/>
            <person name="Kycia H."/>
            <person name="Studier F.W."/>
            <person name="Sali A."/>
            <person name="Burley S.K."/>
        </authorList>
    </citation>
    <scope>X-RAY CRYSTALLOGRAPHY (2.5 ANGSTROMS) IN COMPLEX WITH METAL IONS</scope>
</reference>
<reference key="8">
    <citation type="journal article" date="2003" name="J. Am. Chem. Soc.">
        <title>Structure and mechanism of action of isopentenylpyrophosphate-dimethylallylpyrophosphate isomerase.</title>
        <authorList>
            <person name="Wouters J."/>
            <person name="Oudjama Y."/>
            <person name="Ghosh S."/>
            <person name="Stalon V."/>
            <person name="Droogmans L."/>
            <person name="Oldfield E."/>
        </authorList>
    </citation>
    <scope>X-RAY CRYSTALLOGRAPHY (1.93 ANGSTROMS) IN COMPLEX WITH SUBSTRATE ANALOG; MANGANESE AND MAGNESIUM IONS</scope>
</reference>
<reference key="9">
    <citation type="journal article" date="2003" name="J. Biol. Chem.">
        <title>Catalytic mechanism of Escherichia coli isopentenyl diphosphate isomerase involves Cys-67, Glu-116, and Tyr-104 as suggested by crystal structures of complexes with transition state analogues and irreversible inhibitors.</title>
        <authorList>
            <person name="Wouters J."/>
            <person name="Oudjama Y."/>
            <person name="Barkley S.J."/>
            <person name="Tricot C."/>
            <person name="Stalon V."/>
            <person name="Droogmans L."/>
            <person name="Poulter C.D."/>
        </authorList>
    </citation>
    <scope>X-RAY CRYSTALLOGRAPHY (1.97 ANGSTROMS) IN COMPLEX WITH SUBSTRATE ANALOGS</scope>
</reference>
<reference key="10">
    <citation type="journal article" date="2004" name="Proteins">
        <title>Crystal structure of the C67A mutant of isopentenyl diphosphate isomerase complexed with a mechanism-based irreversible inhibitor.</title>
        <authorList>
            <person name="Wouters J."/>
            <person name="Oudjama Y."/>
            <person name="Stalon V."/>
            <person name="Droogmans L."/>
            <person name="Poulter C.D."/>
        </authorList>
    </citation>
    <scope>X-RAY CRYSTALLOGRAPHY (2.0 ANGSTROMS) OF MUTANT ALA-67 IN COMPLEX WITH SUBSTRATE ANALOG</scope>
</reference>
<reference key="11">
    <citation type="journal article" date="2005" name="J. Am. Chem. Soc.">
        <title>A crystallographic investigation of phosphoantigen binding to isopentenyl pyrophosphate/dimethylallyl pyrophosphate isomerase.</title>
        <authorList>
            <person name="Wouters J."/>
            <person name="Yin F."/>
            <person name="Song Y."/>
            <person name="Zhang Y."/>
            <person name="Oudjama Y."/>
            <person name="Stalon V."/>
            <person name="Droogmans L."/>
            <person name="Morita C.T."/>
            <person name="Oldfield E."/>
        </authorList>
    </citation>
    <scope>X-RAY CRYSTALLOGRAPHY (1.65 ANGSTROMS) IN COMPLEX WITH SUBSTRATE ANALOGS; MANGANESE AND MAGNESIUM IONS</scope>
</reference>
<reference key="12">
    <citation type="journal article" date="2006" name="J. Biol. Chem.">
        <title>Structural role for Tyr-104 in Escherichia coli isopentenyl-diphosphate isomerase: site-directed mutagenesis, enzymology, and protein crystallography.</title>
        <authorList>
            <person name="de Ruyck J."/>
            <person name="Durisotti V."/>
            <person name="Oudjama Y."/>
            <person name="Wouters J."/>
        </authorList>
    </citation>
    <scope>X-RAY CRYSTALLOGRAPHY (1.80 ANGSTROMS) OF MUTANT ALA/PHE-104 IN COMPLEX WITH SUBSTRATE ANALOG</scope>
    <scope>BIOPHYSICOCHEMICAL PROPERTIES</scope>
</reference>
<keyword id="KW-0002">3D-structure</keyword>
<keyword id="KW-0963">Cytoplasm</keyword>
<keyword id="KW-0413">Isomerase</keyword>
<keyword id="KW-0414">Isoprene biosynthesis</keyword>
<keyword id="KW-0460">Magnesium</keyword>
<keyword id="KW-0464">Manganese</keyword>
<keyword id="KW-0479">Metal-binding</keyword>
<keyword id="KW-1185">Reference proteome</keyword>
<sequence>MQTEHVILLNAQGVPTGTLEKYAAHTADTRLHLAFSSWLFNAKGQLLVTRRALSKKAWPGVWTNSVCGHPQLGESNEDAVIRRCRYELGVEITPPESIYPDFRYRATDPSGIVENEVCPVFAARTTSALQINDDEVMDYQWCDLADVLHGIDATPWAFSPWMVMQATNREARKRLSAFTQLK</sequence>
<feature type="chain" id="PRO_0000205249" description="Isopentenyl-diphosphate Delta-isomerase">
    <location>
        <begin position="1"/>
        <end position="182"/>
    </location>
</feature>
<feature type="domain" description="Nudix hydrolase">
    <location>
        <begin position="30"/>
        <end position="164"/>
    </location>
</feature>
<feature type="active site">
    <location>
        <position position="67"/>
    </location>
</feature>
<feature type="active site">
    <location>
        <position position="116"/>
    </location>
</feature>
<feature type="binding site">
    <location>
        <position position="21"/>
    </location>
    <ligand>
        <name>substrate</name>
    </ligand>
</feature>
<feature type="binding site" evidence="6 8">
    <location>
        <position position="25"/>
    </location>
    <ligand>
        <name>Mn(2+)</name>
        <dbReference type="ChEBI" id="CHEBI:29035"/>
    </ligand>
</feature>
<feature type="binding site" evidence="6 8">
    <location>
        <position position="32"/>
    </location>
    <ligand>
        <name>Mn(2+)</name>
        <dbReference type="ChEBI" id="CHEBI:29035"/>
    </ligand>
</feature>
<feature type="binding site">
    <location>
        <position position="51"/>
    </location>
    <ligand>
        <name>substrate</name>
    </ligand>
</feature>
<feature type="binding site">
    <location>
        <position position="55"/>
    </location>
    <ligand>
        <name>substrate</name>
    </ligand>
</feature>
<feature type="binding site">
    <location>
        <position position="67"/>
    </location>
    <ligand>
        <name>Mg(2+)</name>
        <dbReference type="ChEBI" id="CHEBI:18420"/>
    </ligand>
</feature>
<feature type="binding site" evidence="6 8">
    <location>
        <position position="69"/>
    </location>
    <ligand>
        <name>Mn(2+)</name>
        <dbReference type="ChEBI" id="CHEBI:29035"/>
    </ligand>
</feature>
<feature type="binding site">
    <location>
        <position position="69"/>
    </location>
    <ligand>
        <name>substrate</name>
    </ligand>
</feature>
<feature type="binding site">
    <location>
        <position position="83"/>
    </location>
    <ligand>
        <name>substrate</name>
    </ligand>
</feature>
<feature type="binding site">
    <location>
        <position position="87"/>
    </location>
    <ligand>
        <name>Mg(2+)</name>
        <dbReference type="ChEBI" id="CHEBI:18420"/>
    </ligand>
</feature>
<feature type="binding site">
    <location>
        <position position="87"/>
    </location>
    <ligand>
        <name>substrate</name>
    </ligand>
</feature>
<feature type="binding site" evidence="6 8">
    <location>
        <position position="114"/>
    </location>
    <ligand>
        <name>Mn(2+)</name>
        <dbReference type="ChEBI" id="CHEBI:29035"/>
    </ligand>
</feature>
<feature type="binding site" evidence="6 8">
    <location>
        <position position="116"/>
    </location>
    <ligand>
        <name>Mn(2+)</name>
        <dbReference type="ChEBI" id="CHEBI:29035"/>
    </ligand>
</feature>
<feature type="site" description="Essential for catalytic activity">
    <location>
        <position position="104"/>
    </location>
</feature>
<feature type="mutagenesis site" description="Reduces activity by 99%.">
    <original>Y</original>
    <variation>A</variation>
    <location>
        <position position="104"/>
    </location>
</feature>
<feature type="mutagenesis site" description="Reduces activity by 97%.">
    <original>Y</original>
    <variation>F</variation>
    <location>
        <position position="104"/>
    </location>
</feature>
<feature type="strand" evidence="15">
    <location>
        <begin position="5"/>
        <end position="9"/>
    </location>
</feature>
<feature type="strand" evidence="15">
    <location>
        <begin position="11"/>
        <end position="13"/>
    </location>
</feature>
<feature type="strand" evidence="15">
    <location>
        <begin position="15"/>
        <end position="20"/>
    </location>
</feature>
<feature type="helix" evidence="15">
    <location>
        <begin position="21"/>
        <end position="24"/>
    </location>
</feature>
<feature type="strand" evidence="14">
    <location>
        <begin position="35"/>
        <end position="40"/>
    </location>
</feature>
<feature type="strand" evidence="14">
    <location>
        <begin position="46"/>
        <end position="51"/>
    </location>
</feature>
<feature type="strand" evidence="14">
    <location>
        <begin position="56"/>
        <end position="58"/>
    </location>
</feature>
<feature type="strand" evidence="14">
    <location>
        <begin position="62"/>
        <end position="68"/>
    </location>
</feature>
<feature type="helix" evidence="14">
    <location>
        <begin position="76"/>
        <end position="88"/>
    </location>
</feature>
<feature type="strand" evidence="14">
    <location>
        <begin position="96"/>
        <end position="99"/>
    </location>
</feature>
<feature type="strand" evidence="14">
    <location>
        <begin position="103"/>
        <end position="107"/>
    </location>
</feature>
<feature type="strand" evidence="14">
    <location>
        <begin position="113"/>
        <end position="117"/>
    </location>
</feature>
<feature type="strand" evidence="14">
    <location>
        <begin position="120"/>
        <end position="125"/>
    </location>
</feature>
<feature type="turn" evidence="14">
    <location>
        <begin position="133"/>
        <end position="135"/>
    </location>
</feature>
<feature type="strand" evidence="14">
    <location>
        <begin position="136"/>
        <end position="142"/>
    </location>
</feature>
<feature type="helix" evidence="14">
    <location>
        <begin position="144"/>
        <end position="153"/>
    </location>
</feature>
<feature type="helix" evidence="14">
    <location>
        <begin position="155"/>
        <end position="157"/>
    </location>
</feature>
<feature type="helix" evidence="14">
    <location>
        <begin position="160"/>
        <end position="167"/>
    </location>
</feature>
<feature type="helix" evidence="14">
    <location>
        <begin position="169"/>
        <end position="177"/>
    </location>
</feature>
<gene>
    <name evidence="11" type="primary">idi</name>
    <name type="synonym">ygfV</name>
    <name type="ordered locus">b2889</name>
    <name type="ordered locus">JW2857</name>
</gene>
<protein>
    <recommendedName>
        <fullName>Isopentenyl-diphosphate Delta-isomerase</fullName>
        <shortName evidence="11">IPP isomerase</shortName>
        <ecNumber evidence="2">5.3.3.2</ecNumber>
    </recommendedName>
    <alternativeName>
        <fullName>IPP:DMAPP isomerase</fullName>
    </alternativeName>
    <alternativeName>
        <fullName>Isopentenyl pyrophosphate isomerase</fullName>
    </alternativeName>
</protein>